<feature type="signal peptide" evidence="1">
    <location>
        <begin position="1"/>
        <end position="24"/>
    </location>
</feature>
<feature type="chain" id="PRO_0000282085" description="Uncharacterized lipoprotein SAOUHSC_00053">
    <location>
        <begin position="25"/>
        <end position="256"/>
    </location>
</feature>
<feature type="lipid moiety-binding region" description="N-palmitoyl cysteine" evidence="1">
    <location>
        <position position="25"/>
    </location>
</feature>
<feature type="lipid moiety-binding region" description="S-diacylglycerol cysteine" evidence="1">
    <location>
        <position position="25"/>
    </location>
</feature>
<feature type="helix" evidence="3">
    <location>
        <begin position="35"/>
        <end position="41"/>
    </location>
</feature>
<feature type="helix" evidence="3">
    <location>
        <begin position="49"/>
        <end position="54"/>
    </location>
</feature>
<feature type="strand" evidence="3">
    <location>
        <begin position="70"/>
        <end position="80"/>
    </location>
</feature>
<feature type="strand" evidence="3">
    <location>
        <begin position="86"/>
        <end position="96"/>
    </location>
</feature>
<feature type="turn" evidence="3">
    <location>
        <begin position="97"/>
        <end position="100"/>
    </location>
</feature>
<feature type="strand" evidence="3">
    <location>
        <begin position="101"/>
        <end position="111"/>
    </location>
</feature>
<feature type="strand" evidence="3">
    <location>
        <begin position="124"/>
        <end position="131"/>
    </location>
</feature>
<feature type="strand" evidence="3">
    <location>
        <begin position="134"/>
        <end position="139"/>
    </location>
</feature>
<feature type="helix" evidence="3">
    <location>
        <begin position="144"/>
        <end position="152"/>
    </location>
</feature>
<feature type="helix" evidence="3">
    <location>
        <begin position="156"/>
        <end position="158"/>
    </location>
</feature>
<feature type="strand" evidence="3">
    <location>
        <begin position="170"/>
        <end position="172"/>
    </location>
</feature>
<feature type="strand" evidence="3">
    <location>
        <begin position="182"/>
        <end position="187"/>
    </location>
</feature>
<feature type="helix" evidence="3">
    <location>
        <begin position="193"/>
        <end position="201"/>
    </location>
</feature>
<feature type="strand" evidence="3">
    <location>
        <begin position="211"/>
        <end position="216"/>
    </location>
</feature>
<feature type="strand" evidence="3">
    <location>
        <begin position="229"/>
        <end position="237"/>
    </location>
</feature>
<feature type="strand" evidence="3">
    <location>
        <begin position="240"/>
        <end position="251"/>
    </location>
</feature>
<accession>Q2G1Q0</accession>
<dbReference type="EMBL" id="CP000253">
    <property type="protein sequence ID" value="ABD29241.1"/>
    <property type="molecule type" value="Genomic_DNA"/>
</dbReference>
<dbReference type="RefSeq" id="WP_000597212.1">
    <property type="nucleotide sequence ID" value="NZ_LS483365.1"/>
</dbReference>
<dbReference type="RefSeq" id="YP_498658.1">
    <property type="nucleotide sequence ID" value="NC_007795.1"/>
</dbReference>
<dbReference type="PDB" id="4BIG">
    <property type="method" value="X-ray"/>
    <property type="resolution" value="2.27 A"/>
    <property type="chains" value="A=26-256"/>
</dbReference>
<dbReference type="PDBsum" id="4BIG"/>
<dbReference type="SMR" id="Q2G1Q0"/>
<dbReference type="STRING" id="93061.SAOUHSC_00053"/>
<dbReference type="GeneID" id="3919085"/>
<dbReference type="KEGG" id="sao:SAOUHSC_00053"/>
<dbReference type="PATRIC" id="fig|93061.5.peg.47"/>
<dbReference type="HOGENOM" id="CLU_071589_0_1_9"/>
<dbReference type="OrthoDB" id="2189886at2"/>
<dbReference type="EvolutionaryTrace" id="Q2G1Q0"/>
<dbReference type="Proteomes" id="UP000008816">
    <property type="component" value="Chromosome"/>
</dbReference>
<dbReference type="GO" id="GO:0005886">
    <property type="term" value="C:plasma membrane"/>
    <property type="evidence" value="ECO:0007669"/>
    <property type="project" value="UniProtKB-SubCell"/>
</dbReference>
<dbReference type="Gene3D" id="2.50.20.40">
    <property type="match status" value="1"/>
</dbReference>
<dbReference type="InterPro" id="IPR007595">
    <property type="entry name" value="Csa"/>
</dbReference>
<dbReference type="InterPro" id="IPR038641">
    <property type="entry name" value="Csa_sf"/>
</dbReference>
<dbReference type="NCBIfam" id="TIGR01742">
    <property type="entry name" value="SA_tandem_lipo"/>
    <property type="match status" value="1"/>
</dbReference>
<dbReference type="Pfam" id="PF04507">
    <property type="entry name" value="DUF576"/>
    <property type="match status" value="1"/>
</dbReference>
<dbReference type="PROSITE" id="PS51257">
    <property type="entry name" value="PROKAR_LIPOPROTEIN"/>
    <property type="match status" value="1"/>
</dbReference>
<keyword id="KW-0002">3D-structure</keyword>
<keyword id="KW-1003">Cell membrane</keyword>
<keyword id="KW-0449">Lipoprotein</keyword>
<keyword id="KW-0472">Membrane</keyword>
<keyword id="KW-0564">Palmitate</keyword>
<keyword id="KW-1185">Reference proteome</keyword>
<keyword id="KW-0732">Signal</keyword>
<comment type="subcellular location">
    <subcellularLocation>
        <location evidence="1">Cell membrane</location>
        <topology evidence="1">Lipid-anchor</topology>
    </subcellularLocation>
</comment>
<comment type="similarity">
    <text evidence="2">Belongs to the staphylococcal tandem lipoprotein family.</text>
</comment>
<gene>
    <name type="ordered locus">SAOUHSC_00053</name>
</gene>
<protein>
    <recommendedName>
        <fullName>Uncharacterized lipoprotein SAOUHSC_00053</fullName>
    </recommendedName>
</protein>
<reference key="1">
    <citation type="book" date="2006" name="Gram positive pathogens, 2nd edition">
        <title>The Staphylococcus aureus NCTC 8325 genome.</title>
        <editorList>
            <person name="Fischetti V."/>
            <person name="Novick R."/>
            <person name="Ferretti J."/>
            <person name="Portnoy D."/>
            <person name="Rood J."/>
        </editorList>
        <authorList>
            <person name="Gillaspy A.F."/>
            <person name="Worrell V."/>
            <person name="Orvis J."/>
            <person name="Roe B.A."/>
            <person name="Dyer D.W."/>
            <person name="Iandolo J.J."/>
        </authorList>
    </citation>
    <scope>NUCLEOTIDE SEQUENCE [LARGE SCALE GENOMIC DNA]</scope>
    <source>
        <strain>NCTC 8325 / PS 47</strain>
    </source>
</reference>
<sequence>MIKRVNKLVLGISLLFLVISITAGCGMGKEAEIKKSFEKTLSMYPIKNLEDLYDKEGYRDDQFDKNDKGTWIVNSQMAIQNKGEALKIKGMLLKIDRNTRSAKGFYYTNEIKTEKYEVAQDNQKKYPVKMINNKFISTEEVKEENIKKEIENFKFFAQYSNFKDLMNYKDGDISYNPEVPSYSAQYQLTNDDYNVKQLRKRYDIPTNKAPKLLLKGTGNLKGSSVGYKKIEFTFLENKNENIYFTDSLHLEPSEDK</sequence>
<evidence type="ECO:0000255" key="1">
    <source>
        <dbReference type="PROSITE-ProRule" id="PRU00303"/>
    </source>
</evidence>
<evidence type="ECO:0000305" key="2"/>
<evidence type="ECO:0007829" key="3">
    <source>
        <dbReference type="PDB" id="4BIG"/>
    </source>
</evidence>
<organism>
    <name type="scientific">Staphylococcus aureus (strain NCTC 8325 / PS 47)</name>
    <dbReference type="NCBI Taxonomy" id="93061"/>
    <lineage>
        <taxon>Bacteria</taxon>
        <taxon>Bacillati</taxon>
        <taxon>Bacillota</taxon>
        <taxon>Bacilli</taxon>
        <taxon>Bacillales</taxon>
        <taxon>Staphylococcaceae</taxon>
        <taxon>Staphylococcus</taxon>
    </lineage>
</organism>
<name>Y053_STAA8</name>
<proteinExistence type="evidence at protein level"/>